<sequence length="246" mass="27752">MSKPKDKERINEKRRAKFKELQKKIGIFFTNEKLLIQAFTHSSYVNEHRRRPHEDNERLEFLGDAVLELTVSQYLFKKFPHMSEGELTKLRAAIVCEPSLVKFANALSFGELVLLGKGEELTGGRTRPALLADVFEAFIGALYLDQGMDAVMQFLGQTIFPKIDEGAFSHVMDFKSQLQELVQRDGIGVLEYSILEEKGPAHNKEFVSRVSLNGQELGIGVGKSKKEAEQHAAQMALQKLKTIGKE</sequence>
<comment type="function">
    <text evidence="1">Digests double-stranded RNA. Involved in the processing of primary rRNA transcript to yield the immediate precursors to the large and small rRNAs (23S and 16S). Processes some mRNAs, and tRNAs when they are encoded in the rRNA operon. Processes pre-crRNA and tracrRNA of type II CRISPR loci if present in the organism.</text>
</comment>
<comment type="catalytic activity">
    <reaction evidence="1">
        <text>Endonucleolytic cleavage to 5'-phosphomonoester.</text>
        <dbReference type="EC" id="3.1.26.3"/>
    </reaction>
</comment>
<comment type="cofactor">
    <cofactor evidence="1">
        <name>Mg(2+)</name>
        <dbReference type="ChEBI" id="CHEBI:18420"/>
    </cofactor>
</comment>
<comment type="subunit">
    <text evidence="1">Homodimer.</text>
</comment>
<comment type="subcellular location">
    <subcellularLocation>
        <location evidence="1">Cytoplasm</location>
    </subcellularLocation>
</comment>
<comment type="similarity">
    <text evidence="1">Belongs to the ribonuclease III family.</text>
</comment>
<evidence type="ECO:0000255" key="1">
    <source>
        <dbReference type="HAMAP-Rule" id="MF_00104"/>
    </source>
</evidence>
<organism>
    <name type="scientific">Geobacillus sp. (strain WCH70)</name>
    <dbReference type="NCBI Taxonomy" id="471223"/>
    <lineage>
        <taxon>Bacteria</taxon>
        <taxon>Bacillati</taxon>
        <taxon>Bacillota</taxon>
        <taxon>Bacilli</taxon>
        <taxon>Bacillales</taxon>
        <taxon>Anoxybacillaceae</taxon>
        <taxon>Geobacillus</taxon>
    </lineage>
</organism>
<gene>
    <name evidence="1" type="primary">rnc</name>
    <name type="ordered locus">GWCH70_1083</name>
</gene>
<dbReference type="EC" id="3.1.26.3" evidence="1"/>
<dbReference type="EMBL" id="CP001638">
    <property type="protein sequence ID" value="ACS23943.1"/>
    <property type="molecule type" value="Genomic_DNA"/>
</dbReference>
<dbReference type="SMR" id="C5D8T6"/>
<dbReference type="STRING" id="471223.GWCH70_1083"/>
<dbReference type="KEGG" id="gwc:GWCH70_1083"/>
<dbReference type="eggNOG" id="COG0571">
    <property type="taxonomic scope" value="Bacteria"/>
</dbReference>
<dbReference type="HOGENOM" id="CLU_000907_1_3_9"/>
<dbReference type="OrthoDB" id="9805026at2"/>
<dbReference type="GO" id="GO:0005737">
    <property type="term" value="C:cytoplasm"/>
    <property type="evidence" value="ECO:0007669"/>
    <property type="project" value="UniProtKB-SubCell"/>
</dbReference>
<dbReference type="GO" id="GO:0003725">
    <property type="term" value="F:double-stranded RNA binding"/>
    <property type="evidence" value="ECO:0007669"/>
    <property type="project" value="TreeGrafter"/>
</dbReference>
<dbReference type="GO" id="GO:0046872">
    <property type="term" value="F:metal ion binding"/>
    <property type="evidence" value="ECO:0007669"/>
    <property type="project" value="UniProtKB-KW"/>
</dbReference>
<dbReference type="GO" id="GO:0004525">
    <property type="term" value="F:ribonuclease III activity"/>
    <property type="evidence" value="ECO:0007669"/>
    <property type="project" value="UniProtKB-UniRule"/>
</dbReference>
<dbReference type="GO" id="GO:0019843">
    <property type="term" value="F:rRNA binding"/>
    <property type="evidence" value="ECO:0007669"/>
    <property type="project" value="UniProtKB-KW"/>
</dbReference>
<dbReference type="GO" id="GO:0006397">
    <property type="term" value="P:mRNA processing"/>
    <property type="evidence" value="ECO:0007669"/>
    <property type="project" value="UniProtKB-UniRule"/>
</dbReference>
<dbReference type="GO" id="GO:0010468">
    <property type="term" value="P:regulation of gene expression"/>
    <property type="evidence" value="ECO:0007669"/>
    <property type="project" value="TreeGrafter"/>
</dbReference>
<dbReference type="GO" id="GO:0006364">
    <property type="term" value="P:rRNA processing"/>
    <property type="evidence" value="ECO:0007669"/>
    <property type="project" value="UniProtKB-UniRule"/>
</dbReference>
<dbReference type="GO" id="GO:0008033">
    <property type="term" value="P:tRNA processing"/>
    <property type="evidence" value="ECO:0007669"/>
    <property type="project" value="UniProtKB-KW"/>
</dbReference>
<dbReference type="CDD" id="cd10845">
    <property type="entry name" value="DSRM_RNAse_III_family"/>
    <property type="match status" value="1"/>
</dbReference>
<dbReference type="CDD" id="cd00593">
    <property type="entry name" value="RIBOc"/>
    <property type="match status" value="1"/>
</dbReference>
<dbReference type="FunFam" id="1.10.1520.10:FF:000001">
    <property type="entry name" value="Ribonuclease 3"/>
    <property type="match status" value="1"/>
</dbReference>
<dbReference type="FunFam" id="3.30.160.20:FF:000003">
    <property type="entry name" value="Ribonuclease 3"/>
    <property type="match status" value="1"/>
</dbReference>
<dbReference type="Gene3D" id="3.30.160.20">
    <property type="match status" value="1"/>
</dbReference>
<dbReference type="Gene3D" id="1.10.1520.10">
    <property type="entry name" value="Ribonuclease III domain"/>
    <property type="match status" value="1"/>
</dbReference>
<dbReference type="HAMAP" id="MF_00104">
    <property type="entry name" value="RNase_III"/>
    <property type="match status" value="1"/>
</dbReference>
<dbReference type="InterPro" id="IPR014720">
    <property type="entry name" value="dsRBD_dom"/>
</dbReference>
<dbReference type="InterPro" id="IPR011907">
    <property type="entry name" value="RNase_III"/>
</dbReference>
<dbReference type="InterPro" id="IPR000999">
    <property type="entry name" value="RNase_III_dom"/>
</dbReference>
<dbReference type="InterPro" id="IPR036389">
    <property type="entry name" value="RNase_III_sf"/>
</dbReference>
<dbReference type="NCBIfam" id="TIGR02191">
    <property type="entry name" value="RNaseIII"/>
    <property type="match status" value="1"/>
</dbReference>
<dbReference type="PANTHER" id="PTHR11207:SF0">
    <property type="entry name" value="RIBONUCLEASE 3"/>
    <property type="match status" value="1"/>
</dbReference>
<dbReference type="PANTHER" id="PTHR11207">
    <property type="entry name" value="RIBONUCLEASE III"/>
    <property type="match status" value="1"/>
</dbReference>
<dbReference type="Pfam" id="PF00035">
    <property type="entry name" value="dsrm"/>
    <property type="match status" value="1"/>
</dbReference>
<dbReference type="Pfam" id="PF14622">
    <property type="entry name" value="Ribonucleas_3_3"/>
    <property type="match status" value="1"/>
</dbReference>
<dbReference type="SMART" id="SM00358">
    <property type="entry name" value="DSRM"/>
    <property type="match status" value="1"/>
</dbReference>
<dbReference type="SMART" id="SM00535">
    <property type="entry name" value="RIBOc"/>
    <property type="match status" value="1"/>
</dbReference>
<dbReference type="SUPFAM" id="SSF54768">
    <property type="entry name" value="dsRNA-binding domain-like"/>
    <property type="match status" value="1"/>
</dbReference>
<dbReference type="SUPFAM" id="SSF69065">
    <property type="entry name" value="RNase III domain-like"/>
    <property type="match status" value="1"/>
</dbReference>
<dbReference type="PROSITE" id="PS50137">
    <property type="entry name" value="DS_RBD"/>
    <property type="match status" value="1"/>
</dbReference>
<dbReference type="PROSITE" id="PS00517">
    <property type="entry name" value="RNASE_3_1"/>
    <property type="match status" value="1"/>
</dbReference>
<dbReference type="PROSITE" id="PS50142">
    <property type="entry name" value="RNASE_3_2"/>
    <property type="match status" value="1"/>
</dbReference>
<keyword id="KW-0963">Cytoplasm</keyword>
<keyword id="KW-0255">Endonuclease</keyword>
<keyword id="KW-0378">Hydrolase</keyword>
<keyword id="KW-0460">Magnesium</keyword>
<keyword id="KW-0479">Metal-binding</keyword>
<keyword id="KW-0507">mRNA processing</keyword>
<keyword id="KW-0540">Nuclease</keyword>
<keyword id="KW-0694">RNA-binding</keyword>
<keyword id="KW-0698">rRNA processing</keyword>
<keyword id="KW-0699">rRNA-binding</keyword>
<keyword id="KW-0819">tRNA processing</keyword>
<name>RNC_GEOSW</name>
<reference key="1">
    <citation type="submission" date="2009-06" db="EMBL/GenBank/DDBJ databases">
        <title>Complete sequence of chromosome of Geopacillus sp. WCH70.</title>
        <authorList>
            <consortium name="US DOE Joint Genome Institute"/>
            <person name="Lucas S."/>
            <person name="Copeland A."/>
            <person name="Lapidus A."/>
            <person name="Glavina del Rio T."/>
            <person name="Dalin E."/>
            <person name="Tice H."/>
            <person name="Bruce D."/>
            <person name="Goodwin L."/>
            <person name="Pitluck S."/>
            <person name="Chertkov O."/>
            <person name="Brettin T."/>
            <person name="Detter J.C."/>
            <person name="Han C."/>
            <person name="Larimer F."/>
            <person name="Land M."/>
            <person name="Hauser L."/>
            <person name="Kyrpides N."/>
            <person name="Mikhailova N."/>
            <person name="Brumm P."/>
            <person name="Mead D.A."/>
            <person name="Richardson P."/>
        </authorList>
    </citation>
    <scope>NUCLEOTIDE SEQUENCE [LARGE SCALE GENOMIC DNA]</scope>
    <source>
        <strain>WCH70</strain>
    </source>
</reference>
<feature type="chain" id="PRO_1000202837" description="Ribonuclease 3">
    <location>
        <begin position="1"/>
        <end position="246"/>
    </location>
</feature>
<feature type="domain" description="RNase III" evidence="1">
    <location>
        <begin position="18"/>
        <end position="147"/>
    </location>
</feature>
<feature type="domain" description="DRBM" evidence="1">
    <location>
        <begin position="173"/>
        <end position="242"/>
    </location>
</feature>
<feature type="active site" evidence="1">
    <location>
        <position position="64"/>
    </location>
</feature>
<feature type="active site" evidence="1">
    <location>
        <position position="136"/>
    </location>
</feature>
<feature type="binding site" evidence="1">
    <location>
        <position position="60"/>
    </location>
    <ligand>
        <name>Mg(2+)</name>
        <dbReference type="ChEBI" id="CHEBI:18420"/>
    </ligand>
</feature>
<feature type="binding site" evidence="1">
    <location>
        <position position="133"/>
    </location>
    <ligand>
        <name>Mg(2+)</name>
        <dbReference type="ChEBI" id="CHEBI:18420"/>
    </ligand>
</feature>
<feature type="binding site" evidence="1">
    <location>
        <position position="136"/>
    </location>
    <ligand>
        <name>Mg(2+)</name>
        <dbReference type="ChEBI" id="CHEBI:18420"/>
    </ligand>
</feature>
<accession>C5D8T6</accession>
<proteinExistence type="inferred from homology"/>
<protein>
    <recommendedName>
        <fullName evidence="1">Ribonuclease 3</fullName>
        <ecNumber evidence="1">3.1.26.3</ecNumber>
    </recommendedName>
    <alternativeName>
        <fullName evidence="1">Ribonuclease III</fullName>
        <shortName evidence="1">RNase III</shortName>
    </alternativeName>
</protein>